<sequence>MTDLREKKRIAFFRGHSAERLAAFALMLKGFRIVARRYRTRLGEIDLIARRGDLVLIVEVKARASFEAAQFAVTPQAMRRIEAAADLWLQRQTDRARLSLRFDMVAVLPRRWPKHVPAFFTAGHYG</sequence>
<dbReference type="EMBL" id="CP001488">
    <property type="protein sequence ID" value="ACN99988.1"/>
    <property type="molecule type" value="Genomic_DNA"/>
</dbReference>
<dbReference type="RefSeq" id="WP_002965427.1">
    <property type="nucleotide sequence ID" value="NC_012441.1"/>
</dbReference>
<dbReference type="SMR" id="C0RGN1"/>
<dbReference type="KEGG" id="bmi:BMEA_A0185"/>
<dbReference type="HOGENOM" id="CLU_115353_0_2_5"/>
<dbReference type="Proteomes" id="UP000001748">
    <property type="component" value="Chromosome I"/>
</dbReference>
<dbReference type="GO" id="GO:0003676">
    <property type="term" value="F:nucleic acid binding"/>
    <property type="evidence" value="ECO:0007669"/>
    <property type="project" value="InterPro"/>
</dbReference>
<dbReference type="Gene3D" id="3.40.1350.10">
    <property type="match status" value="1"/>
</dbReference>
<dbReference type="HAMAP" id="MF_00048">
    <property type="entry name" value="UPF0102"/>
    <property type="match status" value="1"/>
</dbReference>
<dbReference type="InterPro" id="IPR011335">
    <property type="entry name" value="Restrct_endonuc-II-like"/>
</dbReference>
<dbReference type="InterPro" id="IPR011856">
    <property type="entry name" value="tRNA_endonuc-like_dom_sf"/>
</dbReference>
<dbReference type="InterPro" id="IPR003509">
    <property type="entry name" value="UPF0102_YraN-like"/>
</dbReference>
<dbReference type="NCBIfam" id="NF009151">
    <property type="entry name" value="PRK12497.1-5"/>
    <property type="match status" value="1"/>
</dbReference>
<dbReference type="PANTHER" id="PTHR34039">
    <property type="entry name" value="UPF0102 PROTEIN YRAN"/>
    <property type="match status" value="1"/>
</dbReference>
<dbReference type="PANTHER" id="PTHR34039:SF1">
    <property type="entry name" value="UPF0102 PROTEIN YRAN"/>
    <property type="match status" value="1"/>
</dbReference>
<dbReference type="Pfam" id="PF02021">
    <property type="entry name" value="UPF0102"/>
    <property type="match status" value="1"/>
</dbReference>
<dbReference type="SUPFAM" id="SSF52980">
    <property type="entry name" value="Restriction endonuclease-like"/>
    <property type="match status" value="1"/>
</dbReference>
<proteinExistence type="inferred from homology"/>
<accession>C0RGN1</accession>
<protein>
    <recommendedName>
        <fullName evidence="1">UPF0102 protein BMEA_A0185</fullName>
    </recommendedName>
</protein>
<feature type="chain" id="PRO_1000200128" description="UPF0102 protein BMEA_A0185">
    <location>
        <begin position="1"/>
        <end position="126"/>
    </location>
</feature>
<comment type="similarity">
    <text evidence="1">Belongs to the UPF0102 family.</text>
</comment>
<evidence type="ECO:0000255" key="1">
    <source>
        <dbReference type="HAMAP-Rule" id="MF_00048"/>
    </source>
</evidence>
<name>Y185_BRUMB</name>
<gene>
    <name type="ordered locus">BMEA_A0185</name>
</gene>
<reference key="1">
    <citation type="submission" date="2009-03" db="EMBL/GenBank/DDBJ databases">
        <title>Brucella melitensis ATCC 23457 whole genome shotgun sequencing project.</title>
        <authorList>
            <person name="Setubal J.C."/>
            <person name="Boyle S."/>
            <person name="Crasta O.R."/>
            <person name="Gillespie J.J."/>
            <person name="Kenyon R.W."/>
            <person name="Lu J."/>
            <person name="Mane S."/>
            <person name="Nagrani S."/>
            <person name="Shallom J.M."/>
            <person name="Shallom S."/>
            <person name="Shukla M."/>
            <person name="Snyder E.E."/>
            <person name="Sobral B.W."/>
            <person name="Wattam A.R."/>
            <person name="Will R."/>
            <person name="Williams K."/>
            <person name="Yoo H."/>
            <person name="Munk C."/>
            <person name="Tapia R."/>
            <person name="Han C."/>
            <person name="Detter J.C."/>
            <person name="Bruce D."/>
            <person name="Brettin T.S."/>
        </authorList>
    </citation>
    <scope>NUCLEOTIDE SEQUENCE [LARGE SCALE GENOMIC DNA]</scope>
    <source>
        <strain>ATCC 23457</strain>
    </source>
</reference>
<organism>
    <name type="scientific">Brucella melitensis biotype 2 (strain ATCC 23457)</name>
    <dbReference type="NCBI Taxonomy" id="546272"/>
    <lineage>
        <taxon>Bacteria</taxon>
        <taxon>Pseudomonadati</taxon>
        <taxon>Pseudomonadota</taxon>
        <taxon>Alphaproteobacteria</taxon>
        <taxon>Hyphomicrobiales</taxon>
        <taxon>Brucellaceae</taxon>
        <taxon>Brucella/Ochrobactrum group</taxon>
        <taxon>Brucella</taxon>
    </lineage>
</organism>